<keyword id="KW-0067">ATP-binding</keyword>
<keyword id="KW-0131">Cell cycle</keyword>
<keyword id="KW-0132">Cell division</keyword>
<keyword id="KW-0133">Cell shape</keyword>
<keyword id="KW-0961">Cell wall biogenesis/degradation</keyword>
<keyword id="KW-0963">Cytoplasm</keyword>
<keyword id="KW-0436">Ligase</keyword>
<keyword id="KW-0460">Magnesium</keyword>
<keyword id="KW-0547">Nucleotide-binding</keyword>
<keyword id="KW-0573">Peptidoglycan synthesis</keyword>
<keyword id="KW-1185">Reference proteome</keyword>
<feature type="chain" id="PRO_0000101978" description="UDP-N-acetylmuramoyl-L-alanyl-D-glutamate--2,6-diaminopimelate ligase">
    <location>
        <begin position="1"/>
        <end position="486"/>
    </location>
</feature>
<feature type="short sequence motif" description="Meso-diaminopimelate recognition motif" evidence="1">
    <location>
        <begin position="407"/>
        <end position="410"/>
    </location>
</feature>
<feature type="binding site" evidence="1">
    <location>
        <position position="33"/>
    </location>
    <ligand>
        <name>UDP-N-acetyl-alpha-D-muramoyl-L-alanyl-D-glutamate</name>
        <dbReference type="ChEBI" id="CHEBI:83900"/>
    </ligand>
</feature>
<feature type="binding site" evidence="1">
    <location>
        <begin position="110"/>
        <end position="116"/>
    </location>
    <ligand>
        <name>ATP</name>
        <dbReference type="ChEBI" id="CHEBI:30616"/>
    </ligand>
</feature>
<feature type="binding site" evidence="1">
    <location>
        <begin position="152"/>
        <end position="153"/>
    </location>
    <ligand>
        <name>UDP-N-acetyl-alpha-D-muramoyl-L-alanyl-D-glutamate</name>
        <dbReference type="ChEBI" id="CHEBI:83900"/>
    </ligand>
</feature>
<feature type="binding site" evidence="1">
    <location>
        <position position="179"/>
    </location>
    <ligand>
        <name>UDP-N-acetyl-alpha-D-muramoyl-L-alanyl-D-glutamate</name>
        <dbReference type="ChEBI" id="CHEBI:83900"/>
    </ligand>
</feature>
<feature type="binding site" evidence="1">
    <location>
        <position position="185"/>
    </location>
    <ligand>
        <name>UDP-N-acetyl-alpha-D-muramoyl-L-alanyl-D-glutamate</name>
        <dbReference type="ChEBI" id="CHEBI:83900"/>
    </ligand>
</feature>
<feature type="binding site" evidence="1">
    <location>
        <position position="187"/>
    </location>
    <ligand>
        <name>UDP-N-acetyl-alpha-D-muramoyl-L-alanyl-D-glutamate</name>
        <dbReference type="ChEBI" id="CHEBI:83900"/>
    </ligand>
</feature>
<feature type="binding site" evidence="1">
    <location>
        <position position="383"/>
    </location>
    <ligand>
        <name>meso-2,6-diaminopimelate</name>
        <dbReference type="ChEBI" id="CHEBI:57791"/>
    </ligand>
</feature>
<feature type="binding site" evidence="1">
    <location>
        <begin position="407"/>
        <end position="410"/>
    </location>
    <ligand>
        <name>meso-2,6-diaminopimelate</name>
        <dbReference type="ChEBI" id="CHEBI:57791"/>
    </ligand>
</feature>
<feature type="binding site" evidence="1">
    <location>
        <position position="455"/>
    </location>
    <ligand>
        <name>meso-2,6-diaminopimelate</name>
        <dbReference type="ChEBI" id="CHEBI:57791"/>
    </ligand>
</feature>
<feature type="binding site" evidence="1">
    <location>
        <position position="459"/>
    </location>
    <ligand>
        <name>meso-2,6-diaminopimelate</name>
        <dbReference type="ChEBI" id="CHEBI:57791"/>
    </ligand>
</feature>
<feature type="modified residue" description="N6-carboxylysine" evidence="1">
    <location>
        <position position="219"/>
    </location>
</feature>
<feature type="sequence conflict" description="In Ref. 1; AAD53941." evidence="2" ref="1">
    <original>GE</original>
    <variation>W</variation>
    <location>
        <begin position="260"/>
        <end position="261"/>
    </location>
</feature>
<feature type="sequence conflict" description="In Ref. 1; AAD53941." evidence="2" ref="1">
    <original>A</original>
    <variation>G</variation>
    <location>
        <position position="304"/>
    </location>
</feature>
<feature type="sequence conflict" description="In Ref. 1; AAD53941." evidence="2" ref="1">
    <original>A</original>
    <variation>R</variation>
    <location>
        <position position="307"/>
    </location>
</feature>
<name>MURE_ZYMMO</name>
<dbReference type="EC" id="6.3.2.13" evidence="1"/>
<dbReference type="EMBL" id="AF179611">
    <property type="protein sequence ID" value="AAD53941.1"/>
    <property type="molecule type" value="Genomic_DNA"/>
</dbReference>
<dbReference type="EMBL" id="AE008692">
    <property type="protein sequence ID" value="AAV89450.2"/>
    <property type="molecule type" value="Genomic_DNA"/>
</dbReference>
<dbReference type="RefSeq" id="WP_011240696.1">
    <property type="nucleotide sequence ID" value="NZ_CP035711.1"/>
</dbReference>
<dbReference type="SMR" id="Q9RNM2"/>
<dbReference type="STRING" id="264203.ZMO0826"/>
<dbReference type="KEGG" id="zmo:ZMO0826"/>
<dbReference type="eggNOG" id="COG0769">
    <property type="taxonomic scope" value="Bacteria"/>
</dbReference>
<dbReference type="HOGENOM" id="CLU_022291_3_1_5"/>
<dbReference type="UniPathway" id="UPA00219"/>
<dbReference type="Proteomes" id="UP000001173">
    <property type="component" value="Chromosome"/>
</dbReference>
<dbReference type="GO" id="GO:0005737">
    <property type="term" value="C:cytoplasm"/>
    <property type="evidence" value="ECO:0007669"/>
    <property type="project" value="UniProtKB-SubCell"/>
</dbReference>
<dbReference type="GO" id="GO:0005524">
    <property type="term" value="F:ATP binding"/>
    <property type="evidence" value="ECO:0007669"/>
    <property type="project" value="UniProtKB-UniRule"/>
</dbReference>
<dbReference type="GO" id="GO:0000287">
    <property type="term" value="F:magnesium ion binding"/>
    <property type="evidence" value="ECO:0007669"/>
    <property type="project" value="UniProtKB-UniRule"/>
</dbReference>
<dbReference type="GO" id="GO:0008765">
    <property type="term" value="F:UDP-N-acetylmuramoylalanyl-D-glutamate-2,6-diaminopimelate ligase activity"/>
    <property type="evidence" value="ECO:0007669"/>
    <property type="project" value="UniProtKB-UniRule"/>
</dbReference>
<dbReference type="GO" id="GO:0051301">
    <property type="term" value="P:cell division"/>
    <property type="evidence" value="ECO:0007669"/>
    <property type="project" value="UniProtKB-KW"/>
</dbReference>
<dbReference type="GO" id="GO:0071555">
    <property type="term" value="P:cell wall organization"/>
    <property type="evidence" value="ECO:0007669"/>
    <property type="project" value="UniProtKB-KW"/>
</dbReference>
<dbReference type="GO" id="GO:0009252">
    <property type="term" value="P:peptidoglycan biosynthetic process"/>
    <property type="evidence" value="ECO:0007669"/>
    <property type="project" value="UniProtKB-UniRule"/>
</dbReference>
<dbReference type="GO" id="GO:0008360">
    <property type="term" value="P:regulation of cell shape"/>
    <property type="evidence" value="ECO:0007669"/>
    <property type="project" value="UniProtKB-KW"/>
</dbReference>
<dbReference type="Gene3D" id="3.90.190.20">
    <property type="entry name" value="Mur ligase, C-terminal domain"/>
    <property type="match status" value="1"/>
</dbReference>
<dbReference type="Gene3D" id="3.40.1190.10">
    <property type="entry name" value="Mur-like, catalytic domain"/>
    <property type="match status" value="1"/>
</dbReference>
<dbReference type="Gene3D" id="3.40.1390.10">
    <property type="entry name" value="MurE/MurF, N-terminal domain"/>
    <property type="match status" value="1"/>
</dbReference>
<dbReference type="HAMAP" id="MF_00208">
    <property type="entry name" value="MurE"/>
    <property type="match status" value="1"/>
</dbReference>
<dbReference type="InterPro" id="IPR036565">
    <property type="entry name" value="Mur-like_cat_sf"/>
</dbReference>
<dbReference type="InterPro" id="IPR004101">
    <property type="entry name" value="Mur_ligase_C"/>
</dbReference>
<dbReference type="InterPro" id="IPR036615">
    <property type="entry name" value="Mur_ligase_C_dom_sf"/>
</dbReference>
<dbReference type="InterPro" id="IPR013221">
    <property type="entry name" value="Mur_ligase_cen"/>
</dbReference>
<dbReference type="InterPro" id="IPR000713">
    <property type="entry name" value="Mur_ligase_N"/>
</dbReference>
<dbReference type="InterPro" id="IPR035911">
    <property type="entry name" value="MurE/MurF_N"/>
</dbReference>
<dbReference type="InterPro" id="IPR005761">
    <property type="entry name" value="UDP-N-AcMur-Glu-dNH2Pim_ligase"/>
</dbReference>
<dbReference type="NCBIfam" id="TIGR01085">
    <property type="entry name" value="murE"/>
    <property type="match status" value="1"/>
</dbReference>
<dbReference type="NCBIfam" id="NF001124">
    <property type="entry name" value="PRK00139.1-2"/>
    <property type="match status" value="1"/>
</dbReference>
<dbReference type="NCBIfam" id="NF001126">
    <property type="entry name" value="PRK00139.1-4"/>
    <property type="match status" value="1"/>
</dbReference>
<dbReference type="PANTHER" id="PTHR23135">
    <property type="entry name" value="MUR LIGASE FAMILY MEMBER"/>
    <property type="match status" value="1"/>
</dbReference>
<dbReference type="PANTHER" id="PTHR23135:SF4">
    <property type="entry name" value="UDP-N-ACETYLMURAMOYL-L-ALANYL-D-GLUTAMATE--2,6-DIAMINOPIMELATE LIGASE MURE HOMOLOG, CHLOROPLASTIC"/>
    <property type="match status" value="1"/>
</dbReference>
<dbReference type="Pfam" id="PF01225">
    <property type="entry name" value="Mur_ligase"/>
    <property type="match status" value="1"/>
</dbReference>
<dbReference type="Pfam" id="PF02875">
    <property type="entry name" value="Mur_ligase_C"/>
    <property type="match status" value="1"/>
</dbReference>
<dbReference type="Pfam" id="PF08245">
    <property type="entry name" value="Mur_ligase_M"/>
    <property type="match status" value="1"/>
</dbReference>
<dbReference type="SUPFAM" id="SSF53623">
    <property type="entry name" value="MurD-like peptide ligases, catalytic domain"/>
    <property type="match status" value="1"/>
</dbReference>
<dbReference type="SUPFAM" id="SSF53244">
    <property type="entry name" value="MurD-like peptide ligases, peptide-binding domain"/>
    <property type="match status" value="1"/>
</dbReference>
<dbReference type="SUPFAM" id="SSF63418">
    <property type="entry name" value="MurE/MurF N-terminal domain"/>
    <property type="match status" value="1"/>
</dbReference>
<proteinExistence type="inferred from homology"/>
<reference key="1">
    <citation type="submission" date="1999-08" db="EMBL/GenBank/DDBJ databases">
        <authorList>
            <person name="Um H.W."/>
            <person name="Kang H.S."/>
        </authorList>
    </citation>
    <scope>NUCLEOTIDE SEQUENCE [GENOMIC DNA]</scope>
    <source>
        <strain>ATCC 31821 / ZM4 / CP4</strain>
    </source>
</reference>
<reference key="2">
    <citation type="journal article" date="2005" name="Nat. Biotechnol.">
        <title>The genome sequence of the ethanologenic bacterium Zymomonas mobilis ZM4.</title>
        <authorList>
            <person name="Seo J.-S."/>
            <person name="Chong H."/>
            <person name="Park H.S."/>
            <person name="Yoon K.-O."/>
            <person name="Jung C."/>
            <person name="Kim J.J."/>
            <person name="Hong J.H."/>
            <person name="Kim H."/>
            <person name="Kim J.-H."/>
            <person name="Kil J.-I."/>
            <person name="Park C.J."/>
            <person name="Oh H.-M."/>
            <person name="Lee J.-S."/>
            <person name="Jin S.-J."/>
            <person name="Um H.-W."/>
            <person name="Lee H.-J."/>
            <person name="Oh S.-J."/>
            <person name="Kim J.Y."/>
            <person name="Kang H.L."/>
            <person name="Lee S.Y."/>
            <person name="Lee K.J."/>
            <person name="Kang H.S."/>
        </authorList>
    </citation>
    <scope>NUCLEOTIDE SEQUENCE [LARGE SCALE GENOMIC DNA]</scope>
    <source>
        <strain>ATCC 31821 / ZM4 / CP4</strain>
    </source>
</reference>
<reference key="3">
    <citation type="journal article" date="2009" name="Nat. Biotechnol.">
        <title>Improved genome annotation for Zymomonas mobilis.</title>
        <authorList>
            <person name="Yang S."/>
            <person name="Pappas K.M."/>
            <person name="Hauser L.J."/>
            <person name="Land M.L."/>
            <person name="Chen G.L."/>
            <person name="Hurst G.B."/>
            <person name="Pan C."/>
            <person name="Kouvelis V.N."/>
            <person name="Typas M.A."/>
            <person name="Pelletier D.A."/>
            <person name="Klingeman D.M."/>
            <person name="Chang Y.J."/>
            <person name="Samatova N.F."/>
            <person name="Brown S.D."/>
        </authorList>
    </citation>
    <scope>SEQUENCE REVISION</scope>
</reference>
<accession>Q9RNM2</accession>
<accession>Q5NPB0</accession>
<organism>
    <name type="scientific">Zymomonas mobilis subsp. mobilis (strain ATCC 31821 / ZM4 / CP4)</name>
    <dbReference type="NCBI Taxonomy" id="264203"/>
    <lineage>
        <taxon>Bacteria</taxon>
        <taxon>Pseudomonadati</taxon>
        <taxon>Pseudomonadota</taxon>
        <taxon>Alphaproteobacteria</taxon>
        <taxon>Sphingomonadales</taxon>
        <taxon>Zymomonadaceae</taxon>
        <taxon>Zymomonas</taxon>
    </lineage>
</organism>
<protein>
    <recommendedName>
        <fullName evidence="1">UDP-N-acetylmuramoyl-L-alanyl-D-glutamate--2,6-diaminopimelate ligase</fullName>
        <ecNumber evidence="1">6.3.2.13</ecNumber>
    </recommendedName>
    <alternativeName>
        <fullName evidence="1">Meso-A2pm-adding enzyme</fullName>
    </alternativeName>
    <alternativeName>
        <fullName evidence="1">Meso-diaminopimelate-adding enzyme</fullName>
    </alternativeName>
    <alternativeName>
        <fullName evidence="1">UDP-MurNAc-L-Ala-D-Glu:meso-diaminopimelate ligase</fullName>
    </alternativeName>
    <alternativeName>
        <fullName evidence="1">UDP-MurNAc-tripeptide synthetase</fullName>
    </alternativeName>
    <alternativeName>
        <fullName evidence="1">UDP-N-acetylmuramyl-tripeptide synthetase</fullName>
    </alternativeName>
</protein>
<sequence>MSGTEKKLGFLASGYGLSPKEKDYPVLGFAVDSRKVAKGFVFGAFPGAKVNGEDFIEKAIAAGAVAIVARPEVKIEGAVHLVAENPRLAFAEMAARFYAPFPPVMAAVTGTNGKTSVAELCRQLWTITGHKAASIGTLGVITAKNSYSLGMTTPDVVTFLSCCSDLARADISHVIFEASSHGLDQYRSDGAKVIAGAFTSFSRDHLDYHGTMERYLAAKLRLFDERIAPDGTAVIWADDPAATTVIAHVQKRGLKLIDIGEKAEAIRLVNREADSQGQMITLSIKGESYKIRLPLIGGYQLSNALVAAGLVLATGGDIKQTMAALTLLKPVRGRLERATQSQNGAEVYVDYAHTPDGLRAAIEALRPHTEGLLWVVFGAGGDRDKGKRPEMGKIAANLADHVIVTDDNPRGEDAATIRKEVLVGAPLAEEIGGRKEAIFSAIKRAEKGDIVLIAGKGHEQGQIIGRGETMRVLPFDDVTVAKEAVL</sequence>
<evidence type="ECO:0000255" key="1">
    <source>
        <dbReference type="HAMAP-Rule" id="MF_00208"/>
    </source>
</evidence>
<evidence type="ECO:0000305" key="2"/>
<comment type="function">
    <text evidence="1">Catalyzes the addition of meso-diaminopimelic acid to the nucleotide precursor UDP-N-acetylmuramoyl-L-alanyl-D-glutamate (UMAG) in the biosynthesis of bacterial cell-wall peptidoglycan.</text>
</comment>
<comment type="catalytic activity">
    <reaction evidence="1">
        <text>UDP-N-acetyl-alpha-D-muramoyl-L-alanyl-D-glutamate + meso-2,6-diaminopimelate + ATP = UDP-N-acetyl-alpha-D-muramoyl-L-alanyl-gamma-D-glutamyl-meso-2,6-diaminopimelate + ADP + phosphate + H(+)</text>
        <dbReference type="Rhea" id="RHEA:23676"/>
        <dbReference type="ChEBI" id="CHEBI:15378"/>
        <dbReference type="ChEBI" id="CHEBI:30616"/>
        <dbReference type="ChEBI" id="CHEBI:43474"/>
        <dbReference type="ChEBI" id="CHEBI:57791"/>
        <dbReference type="ChEBI" id="CHEBI:83900"/>
        <dbReference type="ChEBI" id="CHEBI:83905"/>
        <dbReference type="ChEBI" id="CHEBI:456216"/>
        <dbReference type="EC" id="6.3.2.13"/>
    </reaction>
</comment>
<comment type="cofactor">
    <cofactor evidence="1">
        <name>Mg(2+)</name>
        <dbReference type="ChEBI" id="CHEBI:18420"/>
    </cofactor>
</comment>
<comment type="pathway">
    <text evidence="1">Cell wall biogenesis; peptidoglycan biosynthesis.</text>
</comment>
<comment type="subcellular location">
    <subcellularLocation>
        <location evidence="1">Cytoplasm</location>
    </subcellularLocation>
</comment>
<comment type="PTM">
    <text evidence="1">Carboxylation is probably crucial for Mg(2+) binding and, consequently, for the gamma-phosphate positioning of ATP.</text>
</comment>
<comment type="similarity">
    <text evidence="1">Belongs to the MurCDEF family. MurE subfamily.</text>
</comment>
<gene>
    <name evidence="1" type="primary">murE</name>
    <name type="ordered locus">ZMO0826</name>
</gene>